<evidence type="ECO:0000255" key="1">
    <source>
        <dbReference type="HAMAP-Rule" id="MF_00605"/>
    </source>
</evidence>
<keyword id="KW-0963">Cytoplasm</keyword>
<keyword id="KW-0489">Methyltransferase</keyword>
<keyword id="KW-0949">S-adenosyl-L-methionine</keyword>
<keyword id="KW-0808">Transferase</keyword>
<keyword id="KW-0819">tRNA processing</keyword>
<organism>
    <name type="scientific">Helicobacter pylori (strain Shi470)</name>
    <dbReference type="NCBI Taxonomy" id="512562"/>
    <lineage>
        <taxon>Bacteria</taxon>
        <taxon>Pseudomonadati</taxon>
        <taxon>Campylobacterota</taxon>
        <taxon>Epsilonproteobacteria</taxon>
        <taxon>Campylobacterales</taxon>
        <taxon>Helicobacteraceae</taxon>
        <taxon>Helicobacter</taxon>
    </lineage>
</organism>
<protein>
    <recommendedName>
        <fullName evidence="1">tRNA (guanine-N(1)-)-methyltransferase</fullName>
        <ecNumber evidence="1">2.1.1.228</ecNumber>
    </recommendedName>
    <alternativeName>
        <fullName evidence="1">M1G-methyltransferase</fullName>
    </alternativeName>
    <alternativeName>
        <fullName evidence="1">tRNA [GM37] methyltransferase</fullName>
    </alternativeName>
</protein>
<sequence length="229" mass="25836">MKFSVLTLFPQLVLPYFEDSILKRALEKNLFELEVLNLRDFSANKHQKADHTLIGGGAGQILDPEMVENALHSVKNPKHTIFLSAVGKPFKQTDAMRLAQKKHVVLVCGRYEGFDERSIELGADEVFCIGDFILTGGELGALCLIDSIARHIQGVLGNAQSLENESFENHYLEAPNFANAVFKSKEINKIPAPLEYSKGNHARIKRLKLDLSKLRTKFYRLDLFKQHKS</sequence>
<gene>
    <name evidence="1" type="primary">trmD</name>
    <name type="ordered locus">HPSH_05925</name>
</gene>
<accession>B2UUQ7</accession>
<name>TRMD_HELPS</name>
<proteinExistence type="inferred from homology"/>
<feature type="chain" id="PRO_1000130178" description="tRNA (guanine-N(1)-)-methyltransferase">
    <location>
        <begin position="1"/>
        <end position="229"/>
    </location>
</feature>
<feature type="binding site" evidence="1">
    <location>
        <position position="109"/>
    </location>
    <ligand>
        <name>S-adenosyl-L-methionine</name>
        <dbReference type="ChEBI" id="CHEBI:59789"/>
    </ligand>
</feature>
<feature type="binding site" evidence="1">
    <location>
        <begin position="129"/>
        <end position="134"/>
    </location>
    <ligand>
        <name>S-adenosyl-L-methionine</name>
        <dbReference type="ChEBI" id="CHEBI:59789"/>
    </ligand>
</feature>
<reference key="1">
    <citation type="submission" date="2008-05" db="EMBL/GenBank/DDBJ databases">
        <title>Genome sequence of Helicobacter pylori from the remote Amazon: traces of Asian ancestry of the first Americans.</title>
        <authorList>
            <person name="Kersulyte D."/>
            <person name="Kalia A."/>
            <person name="Gilman R.H."/>
            <person name="Berg D.E."/>
        </authorList>
    </citation>
    <scope>NUCLEOTIDE SEQUENCE [LARGE SCALE GENOMIC DNA]</scope>
    <source>
        <strain>Shi470</strain>
    </source>
</reference>
<dbReference type="EC" id="2.1.1.228" evidence="1"/>
<dbReference type="EMBL" id="CP001072">
    <property type="protein sequence ID" value="ACD48589.1"/>
    <property type="molecule type" value="Genomic_DNA"/>
</dbReference>
<dbReference type="RefSeq" id="WP_000672919.1">
    <property type="nucleotide sequence ID" value="NC_010698.2"/>
</dbReference>
<dbReference type="SMR" id="B2UUQ7"/>
<dbReference type="KEGG" id="hps:HPSH_05925"/>
<dbReference type="HOGENOM" id="CLU_047363_0_1_7"/>
<dbReference type="GO" id="GO:0005829">
    <property type="term" value="C:cytosol"/>
    <property type="evidence" value="ECO:0007669"/>
    <property type="project" value="TreeGrafter"/>
</dbReference>
<dbReference type="GO" id="GO:0052906">
    <property type="term" value="F:tRNA (guanine(37)-N1)-methyltransferase activity"/>
    <property type="evidence" value="ECO:0007669"/>
    <property type="project" value="UniProtKB-UniRule"/>
</dbReference>
<dbReference type="GO" id="GO:0002939">
    <property type="term" value="P:tRNA N1-guanine methylation"/>
    <property type="evidence" value="ECO:0007669"/>
    <property type="project" value="TreeGrafter"/>
</dbReference>
<dbReference type="CDD" id="cd18080">
    <property type="entry name" value="TrmD-like"/>
    <property type="match status" value="1"/>
</dbReference>
<dbReference type="FunFam" id="1.10.1270.20:FF:000005">
    <property type="entry name" value="tRNA (guanine-N(1)-)-methyltransferase"/>
    <property type="match status" value="1"/>
</dbReference>
<dbReference type="Gene3D" id="3.40.1280.10">
    <property type="match status" value="1"/>
</dbReference>
<dbReference type="Gene3D" id="1.10.1270.20">
    <property type="entry name" value="tRNA(m1g37)methyltransferase, domain 2"/>
    <property type="match status" value="1"/>
</dbReference>
<dbReference type="HAMAP" id="MF_00605">
    <property type="entry name" value="TrmD"/>
    <property type="match status" value="1"/>
</dbReference>
<dbReference type="InterPro" id="IPR029028">
    <property type="entry name" value="Alpha/beta_knot_MTases"/>
</dbReference>
<dbReference type="InterPro" id="IPR023148">
    <property type="entry name" value="tRNA_m1G_MeTrfase_C_sf"/>
</dbReference>
<dbReference type="InterPro" id="IPR002649">
    <property type="entry name" value="tRNA_m1G_MeTrfase_TrmD"/>
</dbReference>
<dbReference type="InterPro" id="IPR029026">
    <property type="entry name" value="tRNA_m1G_MTases_N"/>
</dbReference>
<dbReference type="InterPro" id="IPR016009">
    <property type="entry name" value="tRNA_MeTrfase_TRMD/TRM10"/>
</dbReference>
<dbReference type="NCBIfam" id="NF000648">
    <property type="entry name" value="PRK00026.1"/>
    <property type="match status" value="1"/>
</dbReference>
<dbReference type="NCBIfam" id="TIGR00088">
    <property type="entry name" value="trmD"/>
    <property type="match status" value="1"/>
</dbReference>
<dbReference type="PANTHER" id="PTHR46417">
    <property type="entry name" value="TRNA (GUANINE-N(1)-)-METHYLTRANSFERASE"/>
    <property type="match status" value="1"/>
</dbReference>
<dbReference type="PANTHER" id="PTHR46417:SF1">
    <property type="entry name" value="TRNA (GUANINE-N(1)-)-METHYLTRANSFERASE"/>
    <property type="match status" value="1"/>
</dbReference>
<dbReference type="Pfam" id="PF01746">
    <property type="entry name" value="tRNA_m1G_MT"/>
    <property type="match status" value="1"/>
</dbReference>
<dbReference type="PIRSF" id="PIRSF000386">
    <property type="entry name" value="tRNA_mtase"/>
    <property type="match status" value="1"/>
</dbReference>
<dbReference type="SUPFAM" id="SSF75217">
    <property type="entry name" value="alpha/beta knot"/>
    <property type="match status" value="1"/>
</dbReference>
<comment type="function">
    <text evidence="1">Specifically methylates guanosine-37 in various tRNAs.</text>
</comment>
<comment type="catalytic activity">
    <reaction evidence="1">
        <text>guanosine(37) in tRNA + S-adenosyl-L-methionine = N(1)-methylguanosine(37) in tRNA + S-adenosyl-L-homocysteine + H(+)</text>
        <dbReference type="Rhea" id="RHEA:36899"/>
        <dbReference type="Rhea" id="RHEA-COMP:10145"/>
        <dbReference type="Rhea" id="RHEA-COMP:10147"/>
        <dbReference type="ChEBI" id="CHEBI:15378"/>
        <dbReference type="ChEBI" id="CHEBI:57856"/>
        <dbReference type="ChEBI" id="CHEBI:59789"/>
        <dbReference type="ChEBI" id="CHEBI:73542"/>
        <dbReference type="ChEBI" id="CHEBI:74269"/>
        <dbReference type="EC" id="2.1.1.228"/>
    </reaction>
</comment>
<comment type="subunit">
    <text evidence="1">Homodimer.</text>
</comment>
<comment type="subcellular location">
    <subcellularLocation>
        <location evidence="1">Cytoplasm</location>
    </subcellularLocation>
</comment>
<comment type="similarity">
    <text evidence="1">Belongs to the RNA methyltransferase TrmD family.</text>
</comment>